<reference key="1">
    <citation type="journal article" date="2005" name="Nat. Biotechnol.">
        <title>The complete genome sequence of the meat-borne lactic acid bacterium Lactobacillus sakei 23K.</title>
        <authorList>
            <person name="Chaillou S."/>
            <person name="Champomier-Verges M.-C."/>
            <person name="Cornet M."/>
            <person name="Crutz-Le Coq A.-M."/>
            <person name="Dudez A.-M."/>
            <person name="Martin V."/>
            <person name="Beaufils S."/>
            <person name="Darbon-Rongere E."/>
            <person name="Bossy R."/>
            <person name="Loux V."/>
            <person name="Zagorec M."/>
        </authorList>
    </citation>
    <scope>NUCLEOTIDE SEQUENCE [LARGE SCALE GENOMIC DNA]</scope>
    <source>
        <strain>23K</strain>
    </source>
</reference>
<comment type="catalytic activity">
    <reaction evidence="1">
        <text>(2R)-3-phosphoglycerate + ATP = (2R)-3-phospho-glyceroyl phosphate + ADP</text>
        <dbReference type="Rhea" id="RHEA:14801"/>
        <dbReference type="ChEBI" id="CHEBI:30616"/>
        <dbReference type="ChEBI" id="CHEBI:57604"/>
        <dbReference type="ChEBI" id="CHEBI:58272"/>
        <dbReference type="ChEBI" id="CHEBI:456216"/>
        <dbReference type="EC" id="2.7.2.3"/>
    </reaction>
</comment>
<comment type="pathway">
    <text evidence="1">Carbohydrate degradation; glycolysis; pyruvate from D-glyceraldehyde 3-phosphate: step 2/5.</text>
</comment>
<comment type="subunit">
    <text evidence="1">Monomer.</text>
</comment>
<comment type="subcellular location">
    <subcellularLocation>
        <location evidence="1">Cytoplasm</location>
    </subcellularLocation>
</comment>
<comment type="similarity">
    <text evidence="1">Belongs to the phosphoglycerate kinase family.</text>
</comment>
<feature type="chain" id="PRO_1000009626" description="Phosphoglycerate kinase">
    <location>
        <begin position="1"/>
        <end position="404"/>
    </location>
</feature>
<feature type="binding site" evidence="1">
    <location>
        <begin position="22"/>
        <end position="24"/>
    </location>
    <ligand>
        <name>substrate</name>
    </ligand>
</feature>
<feature type="binding site" evidence="1">
    <location>
        <position position="37"/>
    </location>
    <ligand>
        <name>substrate</name>
    </ligand>
</feature>
<feature type="binding site" evidence="1">
    <location>
        <begin position="60"/>
        <end position="63"/>
    </location>
    <ligand>
        <name>substrate</name>
    </ligand>
</feature>
<feature type="binding site" evidence="1">
    <location>
        <position position="120"/>
    </location>
    <ligand>
        <name>substrate</name>
    </ligand>
</feature>
<feature type="binding site" evidence="1">
    <location>
        <position position="160"/>
    </location>
    <ligand>
        <name>substrate</name>
    </ligand>
</feature>
<feature type="binding site" evidence="1">
    <location>
        <position position="215"/>
    </location>
    <ligand>
        <name>ATP</name>
        <dbReference type="ChEBI" id="CHEBI:30616"/>
    </ligand>
</feature>
<feature type="binding site" evidence="1">
    <location>
        <position position="333"/>
    </location>
    <ligand>
        <name>ATP</name>
        <dbReference type="ChEBI" id="CHEBI:30616"/>
    </ligand>
</feature>
<feature type="binding site" evidence="1">
    <location>
        <begin position="360"/>
        <end position="363"/>
    </location>
    <ligand>
        <name>ATP</name>
        <dbReference type="ChEBI" id="CHEBI:30616"/>
    </ligand>
</feature>
<evidence type="ECO:0000255" key="1">
    <source>
        <dbReference type="HAMAP-Rule" id="MF_00145"/>
    </source>
</evidence>
<name>PGK_LATSS</name>
<dbReference type="EC" id="2.7.2.3" evidence="1"/>
<dbReference type="EMBL" id="CR936503">
    <property type="protein sequence ID" value="CAI54909.1"/>
    <property type="molecule type" value="Genomic_DNA"/>
</dbReference>
<dbReference type="RefSeq" id="WP_011374314.1">
    <property type="nucleotide sequence ID" value="NC_007576.1"/>
</dbReference>
<dbReference type="SMR" id="Q38Y20"/>
<dbReference type="STRING" id="314315.LCA_0605"/>
<dbReference type="KEGG" id="lsa:LCA_0605"/>
<dbReference type="eggNOG" id="COG0126">
    <property type="taxonomic scope" value="Bacteria"/>
</dbReference>
<dbReference type="HOGENOM" id="CLU_025427_0_2_9"/>
<dbReference type="OrthoDB" id="9808460at2"/>
<dbReference type="UniPathway" id="UPA00109">
    <property type="reaction ID" value="UER00185"/>
</dbReference>
<dbReference type="Proteomes" id="UP000002707">
    <property type="component" value="Chromosome"/>
</dbReference>
<dbReference type="GO" id="GO:0005829">
    <property type="term" value="C:cytosol"/>
    <property type="evidence" value="ECO:0007669"/>
    <property type="project" value="TreeGrafter"/>
</dbReference>
<dbReference type="GO" id="GO:0043531">
    <property type="term" value="F:ADP binding"/>
    <property type="evidence" value="ECO:0007669"/>
    <property type="project" value="TreeGrafter"/>
</dbReference>
<dbReference type="GO" id="GO:0005524">
    <property type="term" value="F:ATP binding"/>
    <property type="evidence" value="ECO:0007669"/>
    <property type="project" value="UniProtKB-KW"/>
</dbReference>
<dbReference type="GO" id="GO:0004618">
    <property type="term" value="F:phosphoglycerate kinase activity"/>
    <property type="evidence" value="ECO:0007669"/>
    <property type="project" value="UniProtKB-UniRule"/>
</dbReference>
<dbReference type="GO" id="GO:0006094">
    <property type="term" value="P:gluconeogenesis"/>
    <property type="evidence" value="ECO:0007669"/>
    <property type="project" value="TreeGrafter"/>
</dbReference>
<dbReference type="GO" id="GO:0006096">
    <property type="term" value="P:glycolytic process"/>
    <property type="evidence" value="ECO:0007669"/>
    <property type="project" value="UniProtKB-UniRule"/>
</dbReference>
<dbReference type="CDD" id="cd00318">
    <property type="entry name" value="Phosphoglycerate_kinase"/>
    <property type="match status" value="1"/>
</dbReference>
<dbReference type="FunFam" id="3.40.50.1260:FF:000007">
    <property type="entry name" value="Phosphoglycerate kinase"/>
    <property type="match status" value="1"/>
</dbReference>
<dbReference type="FunFam" id="3.40.50.1260:FF:000008">
    <property type="entry name" value="Phosphoglycerate kinase"/>
    <property type="match status" value="1"/>
</dbReference>
<dbReference type="Gene3D" id="3.40.50.1260">
    <property type="entry name" value="Phosphoglycerate kinase, N-terminal domain"/>
    <property type="match status" value="2"/>
</dbReference>
<dbReference type="HAMAP" id="MF_00145">
    <property type="entry name" value="Phosphoglyc_kinase"/>
    <property type="match status" value="1"/>
</dbReference>
<dbReference type="InterPro" id="IPR001576">
    <property type="entry name" value="Phosphoglycerate_kinase"/>
</dbReference>
<dbReference type="InterPro" id="IPR015911">
    <property type="entry name" value="Phosphoglycerate_kinase_CS"/>
</dbReference>
<dbReference type="InterPro" id="IPR015824">
    <property type="entry name" value="Phosphoglycerate_kinase_N"/>
</dbReference>
<dbReference type="InterPro" id="IPR036043">
    <property type="entry name" value="Phosphoglycerate_kinase_sf"/>
</dbReference>
<dbReference type="PANTHER" id="PTHR11406">
    <property type="entry name" value="PHOSPHOGLYCERATE KINASE"/>
    <property type="match status" value="1"/>
</dbReference>
<dbReference type="PANTHER" id="PTHR11406:SF23">
    <property type="entry name" value="PHOSPHOGLYCERATE KINASE 1, CHLOROPLASTIC-RELATED"/>
    <property type="match status" value="1"/>
</dbReference>
<dbReference type="Pfam" id="PF00162">
    <property type="entry name" value="PGK"/>
    <property type="match status" value="1"/>
</dbReference>
<dbReference type="PIRSF" id="PIRSF000724">
    <property type="entry name" value="Pgk"/>
    <property type="match status" value="1"/>
</dbReference>
<dbReference type="PRINTS" id="PR00477">
    <property type="entry name" value="PHGLYCKINASE"/>
</dbReference>
<dbReference type="SUPFAM" id="SSF53748">
    <property type="entry name" value="Phosphoglycerate kinase"/>
    <property type="match status" value="1"/>
</dbReference>
<dbReference type="PROSITE" id="PS00111">
    <property type="entry name" value="PGLYCERATE_KINASE"/>
    <property type="match status" value="1"/>
</dbReference>
<proteinExistence type="inferred from homology"/>
<sequence>MAKQTVADLKDIKGKKVLVRVDFNVPIKGGVIGDDNRIVAALPTIQYIIDNGGKAILLSHLGRIKSDEDKKELTLKPVAARLGELLNKDVAFVASNEGQELEDAINAMTDGQVLVMENTRFQDIDNDFGKRESKNDPKLGEYWASLGDMFVNDAFGTAHRAHASNVGIATAMKANNKPAVAGYLLEKEIKFLGEAVDAPERPFVAILGGAKVSDKIGVIEHLLAKADKVIVGGGMTYTFYAAKGLSIGNSLVEEDKIELAKELIEKAGDKLVLPVDNVVADAFSNDAKTETVEGNIPDGYMALDIGPKAIADFENVLKDAKTVVWNGPMGVFEMDNFAKGTLAIGEFLGNLSGATTIVGGGDSTAAVKKLGVGDKLTHISTGGGASLEYLEGKTLPGIAAISDK</sequence>
<organism>
    <name type="scientific">Latilactobacillus sakei subsp. sakei (strain 23K)</name>
    <name type="common">Lactobacillus sakei subsp. sakei</name>
    <dbReference type="NCBI Taxonomy" id="314315"/>
    <lineage>
        <taxon>Bacteria</taxon>
        <taxon>Bacillati</taxon>
        <taxon>Bacillota</taxon>
        <taxon>Bacilli</taxon>
        <taxon>Lactobacillales</taxon>
        <taxon>Lactobacillaceae</taxon>
        <taxon>Latilactobacillus</taxon>
    </lineage>
</organism>
<accession>Q38Y20</accession>
<gene>
    <name evidence="1" type="primary">pgk</name>
    <name type="ordered locus">LCA_0605</name>
</gene>
<keyword id="KW-0067">ATP-binding</keyword>
<keyword id="KW-0963">Cytoplasm</keyword>
<keyword id="KW-0324">Glycolysis</keyword>
<keyword id="KW-0418">Kinase</keyword>
<keyword id="KW-0547">Nucleotide-binding</keyword>
<keyword id="KW-1185">Reference proteome</keyword>
<keyword id="KW-0808">Transferase</keyword>
<protein>
    <recommendedName>
        <fullName evidence="1">Phosphoglycerate kinase</fullName>
        <ecNumber evidence="1">2.7.2.3</ecNumber>
    </recommendedName>
</protein>